<keyword id="KW-0012">Acyltransferase</keyword>
<keyword id="KW-0441">Lipid A biosynthesis</keyword>
<keyword id="KW-0444">Lipid biosynthesis</keyword>
<keyword id="KW-0443">Lipid metabolism</keyword>
<keyword id="KW-1185">Reference proteome</keyword>
<keyword id="KW-0677">Repeat</keyword>
<keyword id="KW-0808">Transferase</keyword>
<name>LPXD_XANCP</name>
<sequence length="337" mass="34805">MRLTASEIAAQFGLTVVGDGATEVSGVATLAHAGTGQLSFLANPRYRPQLAETQASVVILRADDAESAQGTALVAKDPYTAFAKIAALFDVAPVRAPGIHASAVIDPTATVSPTAHVGPFVSIGAGSRVGDGCVIGAGSIIGEDCVVDDGCELIARVTLVTRVRLGKRVRVHPGAVLGADGFGLAMDAGHWIKVPQLGGVVIGDDCEIGANTCIDRGALEDTVLEEDVRVDNLVQIAHNCRIGAHSAIAGCTGIAGSAKIGRYCLLGGHVGVVGHLEICDKVVITGKSVVRNSIHEPGEYSSGTPLTDNRTWRKNAARFKQLDALARRILAVGKENQ</sequence>
<proteinExistence type="inferred from homology"/>
<protein>
    <recommendedName>
        <fullName evidence="1">UDP-3-O-acylglucosamine N-acyltransferase</fullName>
        <ecNumber evidence="1">2.3.1.191</ecNumber>
    </recommendedName>
</protein>
<dbReference type="EC" id="2.3.1.191" evidence="1"/>
<dbReference type="EMBL" id="AE008922">
    <property type="protein sequence ID" value="AAM40661.1"/>
    <property type="molecule type" value="Genomic_DNA"/>
</dbReference>
<dbReference type="RefSeq" id="NP_636737.1">
    <property type="nucleotide sequence ID" value="NC_003902.1"/>
</dbReference>
<dbReference type="RefSeq" id="WP_011036555.1">
    <property type="nucleotide sequence ID" value="NC_003902.1"/>
</dbReference>
<dbReference type="SMR" id="Q8PAW3"/>
<dbReference type="STRING" id="190485.XCC1363"/>
<dbReference type="EnsemblBacteria" id="AAM40661">
    <property type="protein sequence ID" value="AAM40661"/>
    <property type="gene ID" value="XCC1363"/>
</dbReference>
<dbReference type="GeneID" id="58014039"/>
<dbReference type="KEGG" id="xcc:XCC1363"/>
<dbReference type="PATRIC" id="fig|190485.4.peg.1465"/>
<dbReference type="eggNOG" id="COG1044">
    <property type="taxonomic scope" value="Bacteria"/>
</dbReference>
<dbReference type="HOGENOM" id="CLU_049865_0_1_6"/>
<dbReference type="OrthoDB" id="9784739at2"/>
<dbReference type="UniPathway" id="UPA00973"/>
<dbReference type="Proteomes" id="UP000001010">
    <property type="component" value="Chromosome"/>
</dbReference>
<dbReference type="GO" id="GO:0016020">
    <property type="term" value="C:membrane"/>
    <property type="evidence" value="ECO:0007669"/>
    <property type="project" value="GOC"/>
</dbReference>
<dbReference type="GO" id="GO:0016410">
    <property type="term" value="F:N-acyltransferase activity"/>
    <property type="evidence" value="ECO:0007669"/>
    <property type="project" value="InterPro"/>
</dbReference>
<dbReference type="GO" id="GO:0009245">
    <property type="term" value="P:lipid A biosynthetic process"/>
    <property type="evidence" value="ECO:0007669"/>
    <property type="project" value="UniProtKB-UniRule"/>
</dbReference>
<dbReference type="CDD" id="cd03352">
    <property type="entry name" value="LbH_LpxD"/>
    <property type="match status" value="1"/>
</dbReference>
<dbReference type="Gene3D" id="1.20.5.170">
    <property type="match status" value="1"/>
</dbReference>
<dbReference type="Gene3D" id="2.160.10.10">
    <property type="entry name" value="Hexapeptide repeat proteins"/>
    <property type="match status" value="1"/>
</dbReference>
<dbReference type="Gene3D" id="3.40.1390.10">
    <property type="entry name" value="MurE/MurF, N-terminal domain"/>
    <property type="match status" value="1"/>
</dbReference>
<dbReference type="HAMAP" id="MF_00523">
    <property type="entry name" value="LpxD"/>
    <property type="match status" value="1"/>
</dbReference>
<dbReference type="InterPro" id="IPR001451">
    <property type="entry name" value="Hexapep"/>
</dbReference>
<dbReference type="InterPro" id="IPR007691">
    <property type="entry name" value="LpxD"/>
</dbReference>
<dbReference type="InterPro" id="IPR011004">
    <property type="entry name" value="Trimer_LpxA-like_sf"/>
</dbReference>
<dbReference type="InterPro" id="IPR020573">
    <property type="entry name" value="UDP_GlcNAc_AcTrfase_non-rep"/>
</dbReference>
<dbReference type="NCBIfam" id="TIGR01853">
    <property type="entry name" value="lipid_A_lpxD"/>
    <property type="match status" value="1"/>
</dbReference>
<dbReference type="NCBIfam" id="NF002060">
    <property type="entry name" value="PRK00892.1"/>
    <property type="match status" value="1"/>
</dbReference>
<dbReference type="PANTHER" id="PTHR43378">
    <property type="entry name" value="UDP-3-O-ACYLGLUCOSAMINE N-ACYLTRANSFERASE"/>
    <property type="match status" value="1"/>
</dbReference>
<dbReference type="PANTHER" id="PTHR43378:SF2">
    <property type="entry name" value="UDP-3-O-ACYLGLUCOSAMINE N-ACYLTRANSFERASE 1, MITOCHONDRIAL-RELATED"/>
    <property type="match status" value="1"/>
</dbReference>
<dbReference type="Pfam" id="PF00132">
    <property type="entry name" value="Hexapep"/>
    <property type="match status" value="1"/>
</dbReference>
<dbReference type="Pfam" id="PF04613">
    <property type="entry name" value="LpxD"/>
    <property type="match status" value="1"/>
</dbReference>
<dbReference type="SUPFAM" id="SSF51161">
    <property type="entry name" value="Trimeric LpxA-like enzymes"/>
    <property type="match status" value="1"/>
</dbReference>
<organism>
    <name type="scientific">Xanthomonas campestris pv. campestris (strain ATCC 33913 / DSM 3586 / NCPPB 528 / LMG 568 / P 25)</name>
    <dbReference type="NCBI Taxonomy" id="190485"/>
    <lineage>
        <taxon>Bacteria</taxon>
        <taxon>Pseudomonadati</taxon>
        <taxon>Pseudomonadota</taxon>
        <taxon>Gammaproteobacteria</taxon>
        <taxon>Lysobacterales</taxon>
        <taxon>Lysobacteraceae</taxon>
        <taxon>Xanthomonas</taxon>
    </lineage>
</organism>
<gene>
    <name evidence="1" type="primary">lpxD</name>
    <name type="ordered locus">XCC1363</name>
</gene>
<comment type="function">
    <text evidence="1">Catalyzes the N-acylation of UDP-3-O-acylglucosamine using 3-hydroxyacyl-ACP as the acyl donor. Is involved in the biosynthesis of lipid A, a phosphorylated glycolipid that anchors the lipopolysaccharide to the outer membrane of the cell.</text>
</comment>
<comment type="catalytic activity">
    <reaction evidence="1">
        <text>a UDP-3-O-[(3R)-3-hydroxyacyl]-alpha-D-glucosamine + a (3R)-hydroxyacyl-[ACP] = a UDP-2-N,3-O-bis[(3R)-3-hydroxyacyl]-alpha-D-glucosamine + holo-[ACP] + H(+)</text>
        <dbReference type="Rhea" id="RHEA:53836"/>
        <dbReference type="Rhea" id="RHEA-COMP:9685"/>
        <dbReference type="Rhea" id="RHEA-COMP:9945"/>
        <dbReference type="ChEBI" id="CHEBI:15378"/>
        <dbReference type="ChEBI" id="CHEBI:64479"/>
        <dbReference type="ChEBI" id="CHEBI:78827"/>
        <dbReference type="ChEBI" id="CHEBI:137740"/>
        <dbReference type="ChEBI" id="CHEBI:137748"/>
        <dbReference type="EC" id="2.3.1.191"/>
    </reaction>
</comment>
<comment type="pathway">
    <text evidence="1">Bacterial outer membrane biogenesis; LPS lipid A biosynthesis.</text>
</comment>
<comment type="subunit">
    <text evidence="1">Homotrimer.</text>
</comment>
<comment type="similarity">
    <text evidence="1">Belongs to the transferase hexapeptide repeat family. LpxD subfamily.</text>
</comment>
<feature type="chain" id="PRO_0000059713" description="UDP-3-O-acylglucosamine N-acyltransferase">
    <location>
        <begin position="1"/>
        <end position="337"/>
    </location>
</feature>
<feature type="active site" description="Proton acceptor" evidence="1">
    <location>
        <position position="238"/>
    </location>
</feature>
<reference key="1">
    <citation type="journal article" date="2002" name="Nature">
        <title>Comparison of the genomes of two Xanthomonas pathogens with differing host specificities.</title>
        <authorList>
            <person name="da Silva A.C.R."/>
            <person name="Ferro J.A."/>
            <person name="Reinach F.C."/>
            <person name="Farah C.S."/>
            <person name="Furlan L.R."/>
            <person name="Quaggio R.B."/>
            <person name="Monteiro-Vitorello C.B."/>
            <person name="Van Sluys M.A."/>
            <person name="Almeida N.F. Jr."/>
            <person name="Alves L.M.C."/>
            <person name="do Amaral A.M."/>
            <person name="Bertolini M.C."/>
            <person name="Camargo L.E.A."/>
            <person name="Camarotte G."/>
            <person name="Cannavan F."/>
            <person name="Cardozo J."/>
            <person name="Chambergo F."/>
            <person name="Ciapina L.P."/>
            <person name="Cicarelli R.M.B."/>
            <person name="Coutinho L.L."/>
            <person name="Cursino-Santos J.R."/>
            <person name="El-Dorry H."/>
            <person name="Faria J.B."/>
            <person name="Ferreira A.J.S."/>
            <person name="Ferreira R.C.C."/>
            <person name="Ferro M.I.T."/>
            <person name="Formighieri E.F."/>
            <person name="Franco M.C."/>
            <person name="Greggio C.C."/>
            <person name="Gruber A."/>
            <person name="Katsuyama A.M."/>
            <person name="Kishi L.T."/>
            <person name="Leite R.P."/>
            <person name="Lemos E.G.M."/>
            <person name="Lemos M.V.F."/>
            <person name="Locali E.C."/>
            <person name="Machado M.A."/>
            <person name="Madeira A.M.B.N."/>
            <person name="Martinez-Rossi N.M."/>
            <person name="Martins E.C."/>
            <person name="Meidanis J."/>
            <person name="Menck C.F.M."/>
            <person name="Miyaki C.Y."/>
            <person name="Moon D.H."/>
            <person name="Moreira L.M."/>
            <person name="Novo M.T.M."/>
            <person name="Okura V.K."/>
            <person name="Oliveira M.C."/>
            <person name="Oliveira V.R."/>
            <person name="Pereira H.A."/>
            <person name="Rossi A."/>
            <person name="Sena J.A.D."/>
            <person name="Silva C."/>
            <person name="de Souza R.F."/>
            <person name="Spinola L.A.F."/>
            <person name="Takita M.A."/>
            <person name="Tamura R.E."/>
            <person name="Teixeira E.C."/>
            <person name="Tezza R.I.D."/>
            <person name="Trindade dos Santos M."/>
            <person name="Truffi D."/>
            <person name="Tsai S.M."/>
            <person name="White F.F."/>
            <person name="Setubal J.C."/>
            <person name="Kitajima J.P."/>
        </authorList>
    </citation>
    <scope>NUCLEOTIDE SEQUENCE [LARGE SCALE GENOMIC DNA]</scope>
    <source>
        <strain>ATCC 33913 / DSM 3586 / NCPPB 528 / LMG 568 / P 25</strain>
    </source>
</reference>
<accession>Q8PAW3</accession>
<evidence type="ECO:0000255" key="1">
    <source>
        <dbReference type="HAMAP-Rule" id="MF_00523"/>
    </source>
</evidence>